<reference key="1">
    <citation type="journal article" date="2010" name="Genome Biol.">
        <title>Structure and dynamics of the pan-genome of Streptococcus pneumoniae and closely related species.</title>
        <authorList>
            <person name="Donati C."/>
            <person name="Hiller N.L."/>
            <person name="Tettelin H."/>
            <person name="Muzzi A."/>
            <person name="Croucher N.J."/>
            <person name="Angiuoli S.V."/>
            <person name="Oggioni M."/>
            <person name="Dunning Hotopp J.C."/>
            <person name="Hu F.Z."/>
            <person name="Riley D.R."/>
            <person name="Covacci A."/>
            <person name="Mitchell T.J."/>
            <person name="Bentley S.D."/>
            <person name="Kilian M."/>
            <person name="Ehrlich G.D."/>
            <person name="Rappuoli R."/>
            <person name="Moxon E.R."/>
            <person name="Masignani V."/>
        </authorList>
    </citation>
    <scope>NUCLEOTIDE SEQUENCE [LARGE SCALE GENOMIC DNA]</scope>
    <source>
        <strain>JJA</strain>
    </source>
</reference>
<organism>
    <name type="scientific">Streptococcus pneumoniae (strain JJA)</name>
    <dbReference type="NCBI Taxonomy" id="488222"/>
    <lineage>
        <taxon>Bacteria</taxon>
        <taxon>Bacillati</taxon>
        <taxon>Bacillota</taxon>
        <taxon>Bacilli</taxon>
        <taxon>Lactobacillales</taxon>
        <taxon>Streptococcaceae</taxon>
        <taxon>Streptococcus</taxon>
    </lineage>
</organism>
<feature type="chain" id="PRO_1000195513" description="6,7-dimethyl-8-ribityllumazine synthase">
    <location>
        <begin position="1"/>
        <end position="155"/>
    </location>
</feature>
<feature type="active site" description="Proton donor" evidence="1">
    <location>
        <position position="88"/>
    </location>
</feature>
<feature type="binding site" evidence="1">
    <location>
        <position position="22"/>
    </location>
    <ligand>
        <name>5-amino-6-(D-ribitylamino)uracil</name>
        <dbReference type="ChEBI" id="CHEBI:15934"/>
    </ligand>
</feature>
<feature type="binding site" evidence="1">
    <location>
        <begin position="56"/>
        <end position="58"/>
    </location>
    <ligand>
        <name>5-amino-6-(D-ribitylamino)uracil</name>
        <dbReference type="ChEBI" id="CHEBI:15934"/>
    </ligand>
</feature>
<feature type="binding site" evidence="1">
    <location>
        <begin position="80"/>
        <end position="82"/>
    </location>
    <ligand>
        <name>5-amino-6-(D-ribitylamino)uracil</name>
        <dbReference type="ChEBI" id="CHEBI:15934"/>
    </ligand>
</feature>
<feature type="binding site" evidence="1">
    <location>
        <begin position="85"/>
        <end position="86"/>
    </location>
    <ligand>
        <name>(2S)-2-hydroxy-3-oxobutyl phosphate</name>
        <dbReference type="ChEBI" id="CHEBI:58830"/>
    </ligand>
</feature>
<feature type="binding site" evidence="1">
    <location>
        <position position="113"/>
    </location>
    <ligand>
        <name>5-amino-6-(D-ribitylamino)uracil</name>
        <dbReference type="ChEBI" id="CHEBI:15934"/>
    </ligand>
</feature>
<feature type="binding site" evidence="1">
    <location>
        <position position="127"/>
    </location>
    <ligand>
        <name>(2S)-2-hydroxy-3-oxobutyl phosphate</name>
        <dbReference type="ChEBI" id="CHEBI:58830"/>
    </ligand>
</feature>
<proteinExistence type="inferred from homology"/>
<dbReference type="EC" id="2.5.1.78" evidence="1"/>
<dbReference type="EMBL" id="CP000919">
    <property type="protein sequence ID" value="ACO18134.1"/>
    <property type="molecule type" value="Genomic_DNA"/>
</dbReference>
<dbReference type="SMR" id="C1CBX9"/>
<dbReference type="KEGG" id="sjj:SPJ_0192"/>
<dbReference type="HOGENOM" id="CLU_089358_1_1_9"/>
<dbReference type="UniPathway" id="UPA00275">
    <property type="reaction ID" value="UER00404"/>
</dbReference>
<dbReference type="Proteomes" id="UP000002206">
    <property type="component" value="Chromosome"/>
</dbReference>
<dbReference type="GO" id="GO:0005829">
    <property type="term" value="C:cytosol"/>
    <property type="evidence" value="ECO:0007669"/>
    <property type="project" value="TreeGrafter"/>
</dbReference>
<dbReference type="GO" id="GO:0009349">
    <property type="term" value="C:riboflavin synthase complex"/>
    <property type="evidence" value="ECO:0007669"/>
    <property type="project" value="InterPro"/>
</dbReference>
<dbReference type="GO" id="GO:0000906">
    <property type="term" value="F:6,7-dimethyl-8-ribityllumazine synthase activity"/>
    <property type="evidence" value="ECO:0007669"/>
    <property type="project" value="UniProtKB-UniRule"/>
</dbReference>
<dbReference type="GO" id="GO:0009231">
    <property type="term" value="P:riboflavin biosynthetic process"/>
    <property type="evidence" value="ECO:0007669"/>
    <property type="project" value="UniProtKB-UniRule"/>
</dbReference>
<dbReference type="CDD" id="cd09209">
    <property type="entry name" value="Lumazine_synthase-I"/>
    <property type="match status" value="1"/>
</dbReference>
<dbReference type="FunFam" id="3.40.50.960:FF:000001">
    <property type="entry name" value="6,7-dimethyl-8-ribityllumazine synthase"/>
    <property type="match status" value="1"/>
</dbReference>
<dbReference type="Gene3D" id="3.40.50.960">
    <property type="entry name" value="Lumazine/riboflavin synthase"/>
    <property type="match status" value="1"/>
</dbReference>
<dbReference type="HAMAP" id="MF_00178">
    <property type="entry name" value="Lumazine_synth"/>
    <property type="match status" value="1"/>
</dbReference>
<dbReference type="InterPro" id="IPR034964">
    <property type="entry name" value="LS"/>
</dbReference>
<dbReference type="InterPro" id="IPR002180">
    <property type="entry name" value="LS/RS"/>
</dbReference>
<dbReference type="InterPro" id="IPR036467">
    <property type="entry name" value="LS/RS_sf"/>
</dbReference>
<dbReference type="NCBIfam" id="TIGR00114">
    <property type="entry name" value="lumazine-synth"/>
    <property type="match status" value="1"/>
</dbReference>
<dbReference type="NCBIfam" id="NF000812">
    <property type="entry name" value="PRK00061.1-4"/>
    <property type="match status" value="1"/>
</dbReference>
<dbReference type="PANTHER" id="PTHR21058:SF0">
    <property type="entry name" value="6,7-DIMETHYL-8-RIBITYLLUMAZINE SYNTHASE"/>
    <property type="match status" value="1"/>
</dbReference>
<dbReference type="PANTHER" id="PTHR21058">
    <property type="entry name" value="6,7-DIMETHYL-8-RIBITYLLUMAZINE SYNTHASE DMRL SYNTHASE LUMAZINE SYNTHASE"/>
    <property type="match status" value="1"/>
</dbReference>
<dbReference type="Pfam" id="PF00885">
    <property type="entry name" value="DMRL_synthase"/>
    <property type="match status" value="1"/>
</dbReference>
<dbReference type="SUPFAM" id="SSF52121">
    <property type="entry name" value="Lumazine synthase"/>
    <property type="match status" value="1"/>
</dbReference>
<name>RISB_STRZJ</name>
<protein>
    <recommendedName>
        <fullName evidence="1">6,7-dimethyl-8-ribityllumazine synthase</fullName>
        <shortName evidence="1">DMRL synthase</shortName>
        <shortName evidence="1">LS</shortName>
        <shortName evidence="1">Lumazine synthase</shortName>
        <ecNumber evidence="1">2.5.1.78</ecNumber>
    </recommendedName>
</protein>
<keyword id="KW-0686">Riboflavin biosynthesis</keyword>
<keyword id="KW-0808">Transferase</keyword>
<gene>
    <name evidence="1" type="primary">ribH</name>
    <name type="ordered locus">SPJ_0192</name>
</gene>
<sequence length="155" mass="16752">MNTYEGNLVANNIKIGIVVARFNEFITSKLLSGALDNLKRENVNEKDIEVAWVPGAFEIPLIASKMAKSKKYDAIICLGAVIRGNTSHYDYVCSEVSKGIAQISLNSEIPVMFGVLTTDTIEQAIERAGTKAGNKGSECAQGAIEMVNLIRTLDA</sequence>
<evidence type="ECO:0000255" key="1">
    <source>
        <dbReference type="HAMAP-Rule" id="MF_00178"/>
    </source>
</evidence>
<comment type="function">
    <text evidence="1">Catalyzes the formation of 6,7-dimethyl-8-ribityllumazine by condensation of 5-amino-6-(D-ribitylamino)uracil with 3,4-dihydroxy-2-butanone 4-phosphate. This is the penultimate step in the biosynthesis of riboflavin.</text>
</comment>
<comment type="catalytic activity">
    <reaction evidence="1">
        <text>(2S)-2-hydroxy-3-oxobutyl phosphate + 5-amino-6-(D-ribitylamino)uracil = 6,7-dimethyl-8-(1-D-ribityl)lumazine + phosphate + 2 H2O + H(+)</text>
        <dbReference type="Rhea" id="RHEA:26152"/>
        <dbReference type="ChEBI" id="CHEBI:15377"/>
        <dbReference type="ChEBI" id="CHEBI:15378"/>
        <dbReference type="ChEBI" id="CHEBI:15934"/>
        <dbReference type="ChEBI" id="CHEBI:43474"/>
        <dbReference type="ChEBI" id="CHEBI:58201"/>
        <dbReference type="ChEBI" id="CHEBI:58830"/>
        <dbReference type="EC" id="2.5.1.78"/>
    </reaction>
</comment>
<comment type="pathway">
    <text evidence="1">Cofactor biosynthesis; riboflavin biosynthesis; riboflavin from 2-hydroxy-3-oxobutyl phosphate and 5-amino-6-(D-ribitylamino)uracil: step 1/2.</text>
</comment>
<comment type="similarity">
    <text evidence="1">Belongs to the DMRL synthase family.</text>
</comment>
<accession>C1CBX9</accession>